<proteinExistence type="inferred from homology"/>
<dbReference type="EC" id="3.5.1.122" evidence="2"/>
<dbReference type="EMBL" id="CH963849">
    <property type="protein sequence ID" value="EDW74403.1"/>
    <property type="molecule type" value="Genomic_DNA"/>
</dbReference>
<dbReference type="SMR" id="B4MQL4"/>
<dbReference type="STRING" id="7260.B4MQL4"/>
<dbReference type="EnsemblMetazoa" id="FBtr0252549">
    <property type="protein sequence ID" value="FBpp0251041"/>
    <property type="gene ID" value="FBgn0223883"/>
</dbReference>
<dbReference type="EnsemblMetazoa" id="XM_002063381.4">
    <property type="protein sequence ID" value="XP_002063417.1"/>
    <property type="gene ID" value="LOC6640630"/>
</dbReference>
<dbReference type="GeneID" id="6640630"/>
<dbReference type="KEGG" id="dwi:6640630"/>
<dbReference type="CTD" id="36743"/>
<dbReference type="eggNOG" id="KOG3261">
    <property type="taxonomic scope" value="Eukaryota"/>
</dbReference>
<dbReference type="HOGENOM" id="CLU_091083_1_0_1"/>
<dbReference type="OMA" id="GWGTVYS"/>
<dbReference type="OrthoDB" id="191192at2759"/>
<dbReference type="PhylomeDB" id="B4MQL4"/>
<dbReference type="ChiTaRS" id="Zasp52">
    <property type="organism name" value="fly"/>
</dbReference>
<dbReference type="Proteomes" id="UP000007798">
    <property type="component" value="Unassembled WGS sequence"/>
</dbReference>
<dbReference type="GO" id="GO:0005829">
    <property type="term" value="C:cytosol"/>
    <property type="evidence" value="ECO:0007669"/>
    <property type="project" value="TreeGrafter"/>
</dbReference>
<dbReference type="GO" id="GO:0005634">
    <property type="term" value="C:nucleus"/>
    <property type="evidence" value="ECO:0007669"/>
    <property type="project" value="TreeGrafter"/>
</dbReference>
<dbReference type="GO" id="GO:0008418">
    <property type="term" value="F:protein-N-terminal asparagine amidohydrolase activity"/>
    <property type="evidence" value="ECO:0007669"/>
    <property type="project" value="InterPro"/>
</dbReference>
<dbReference type="GO" id="GO:0070773">
    <property type="term" value="F:protein-N-terminal glutamine amidohydrolase activity"/>
    <property type="evidence" value="ECO:0007669"/>
    <property type="project" value="UniProtKB-EC"/>
</dbReference>
<dbReference type="FunFam" id="3.10.620.10:FF:000001">
    <property type="entry name" value="Blast:Protein N-terminal glutamine amidohydrolase"/>
    <property type="match status" value="1"/>
</dbReference>
<dbReference type="Gene3D" id="3.10.620.10">
    <property type="entry name" value="Protein N-terminal glutamine amidohydrolase, alpha beta roll"/>
    <property type="match status" value="1"/>
</dbReference>
<dbReference type="InterPro" id="IPR037132">
    <property type="entry name" value="N_Gln_amidohydro_ab_roll_sf"/>
</dbReference>
<dbReference type="InterPro" id="IPR039733">
    <property type="entry name" value="NTAQ1"/>
</dbReference>
<dbReference type="InterPro" id="IPR023128">
    <property type="entry name" value="Prot_N_Gln_amidohydro_ab_roll"/>
</dbReference>
<dbReference type="PANTHER" id="PTHR13035">
    <property type="entry name" value="PROTEIN N-TERMINAL GLUTAMINE AMIDOHYDROLASE"/>
    <property type="match status" value="1"/>
</dbReference>
<dbReference type="PANTHER" id="PTHR13035:SF0">
    <property type="entry name" value="PROTEIN N-TERMINAL GLUTAMINE AMIDOHYDROLASE"/>
    <property type="match status" value="1"/>
</dbReference>
<dbReference type="Pfam" id="PF09764">
    <property type="entry name" value="Nt_Gln_amidase"/>
    <property type="match status" value="1"/>
</dbReference>
<sequence>MTTDFLFPKIADCSYVSCYCEENVWKLCEQVKRTRPEELAKCYAVFVSNEGRTVPLWRQKAGRGDDQVVIWDYHVFFMHNPLPNRCLVFDLDTTLPFPTYFHKYVTETFRSDLALRPEHHRFFRVIPADTYLIEFSSDRRHMRRPDGSWIKPPPSYPPILSNTNTHCLGDFICMSAGKGPGAVYSLSEFVHNFYKQPNMVAQNNK</sequence>
<reference key="1">
    <citation type="journal article" date="2007" name="Nature">
        <title>Evolution of genes and genomes on the Drosophila phylogeny.</title>
        <authorList>
            <consortium name="Drosophila 12 genomes consortium"/>
        </authorList>
    </citation>
    <scope>NUCLEOTIDE SEQUENCE [LARGE SCALE GENOMIC DNA]</scope>
    <source>
        <strain>Tucson 14030-0811.24</strain>
    </source>
</reference>
<protein>
    <recommendedName>
        <fullName>Protein N-terminal glutamine amidohydrolase</fullName>
        <ecNumber evidence="2">3.5.1.122</ecNumber>
    </recommendedName>
    <alternativeName>
        <fullName>Protein NH2-terminal glutamine deamidase</fullName>
        <shortName>N-terminal Gln amidase</shortName>
        <shortName>Nt(Q)-amidase</shortName>
    </alternativeName>
    <alternativeName>
        <fullName>Protein tungus</fullName>
    </alternativeName>
</protein>
<gene>
    <name type="primary">tun</name>
    <name type="ORF">GK21898</name>
</gene>
<evidence type="ECO:0000250" key="1"/>
<evidence type="ECO:0000250" key="2">
    <source>
        <dbReference type="UniProtKB" id="Q80WB5"/>
    </source>
</evidence>
<evidence type="ECO:0000250" key="3">
    <source>
        <dbReference type="UniProtKB" id="Q96HA8"/>
    </source>
</evidence>
<evidence type="ECO:0000305" key="4"/>
<name>NTAQ1_DROWI</name>
<keyword id="KW-0378">Hydrolase</keyword>
<keyword id="KW-1185">Reference proteome</keyword>
<comment type="function">
    <text evidence="2">Mediates the side-chain deamidation of N-terminal glutamine residues to glutamate, an important step in N-end rule pathway of protein degradation. Conversion of the resulting N-terminal glutamine to glutamate renders the protein susceptible to arginylation, polyubiquitination and degradation as specified by the N-end rule. Does not act on substrates with internal or C-terminal glutamine and does not act on non-glutamine residues in any position.</text>
</comment>
<comment type="catalytic activity">
    <reaction evidence="2">
        <text>N-terminal L-glutaminyl-[protein] + H2O = N-terminal L-glutamyl-[protein] + NH4(+)</text>
        <dbReference type="Rhea" id="RHEA:50680"/>
        <dbReference type="Rhea" id="RHEA-COMP:12668"/>
        <dbReference type="Rhea" id="RHEA-COMP:12777"/>
        <dbReference type="ChEBI" id="CHEBI:15377"/>
        <dbReference type="ChEBI" id="CHEBI:28938"/>
        <dbReference type="ChEBI" id="CHEBI:64721"/>
        <dbReference type="ChEBI" id="CHEBI:64722"/>
        <dbReference type="EC" id="3.5.1.122"/>
    </reaction>
</comment>
<comment type="subunit">
    <text evidence="3">Monomer.</text>
</comment>
<comment type="similarity">
    <text evidence="4">Belongs to the NTAQ1 family.</text>
</comment>
<organism>
    <name type="scientific">Drosophila willistoni</name>
    <name type="common">Fruit fly</name>
    <dbReference type="NCBI Taxonomy" id="7260"/>
    <lineage>
        <taxon>Eukaryota</taxon>
        <taxon>Metazoa</taxon>
        <taxon>Ecdysozoa</taxon>
        <taxon>Arthropoda</taxon>
        <taxon>Hexapoda</taxon>
        <taxon>Insecta</taxon>
        <taxon>Pterygota</taxon>
        <taxon>Neoptera</taxon>
        <taxon>Endopterygota</taxon>
        <taxon>Diptera</taxon>
        <taxon>Brachycera</taxon>
        <taxon>Muscomorpha</taxon>
        <taxon>Ephydroidea</taxon>
        <taxon>Drosophilidae</taxon>
        <taxon>Drosophila</taxon>
        <taxon>Sophophora</taxon>
    </lineage>
</organism>
<accession>B4MQL4</accession>
<feature type="chain" id="PRO_0000381832" description="Protein N-terminal glutamine amidohydrolase">
    <location>
        <begin position="1"/>
        <end position="205"/>
    </location>
</feature>
<feature type="active site" evidence="1">
    <location>
        <position position="20"/>
    </location>
</feature>
<feature type="active site" evidence="1">
    <location>
        <position position="74"/>
    </location>
</feature>
<feature type="active site" evidence="1">
    <location>
        <position position="90"/>
    </location>
</feature>